<proteinExistence type="evidence at protein level"/>
<keyword id="KW-0877">Alternative promoter usage</keyword>
<keyword id="KW-0025">Alternative splicing</keyword>
<keyword id="KW-0175">Coiled coil</keyword>
<keyword id="KW-0217">Developmental protein</keyword>
<keyword id="KW-0539">Nucleus</keyword>
<keyword id="KW-0597">Phosphoprotein</keyword>
<keyword id="KW-1185">Reference proteome</keyword>
<keyword id="KW-0677">Repeat</keyword>
<keyword id="KW-0678">Repressor</keyword>
<keyword id="KW-0694">RNA-binding</keyword>
<keyword id="KW-0804">Transcription</keyword>
<keyword id="KW-0805">Transcription regulation</keyword>
<name>SPEN_DROME</name>
<accession>Q8SX83</accession>
<accession>Q9NHN1</accession>
<accession>Q9NJ17</accession>
<accession>Q9U6C3</accession>
<accession>Q9VPL1</accession>
<accession>Q9VPL2</accession>
<feature type="chain" id="PRO_0000081958" description="Protein split ends">
    <location>
        <begin position="1"/>
        <end position="5560"/>
    </location>
</feature>
<feature type="domain" description="RRM 1" evidence="2">
    <location>
        <begin position="554"/>
        <end position="632"/>
    </location>
</feature>
<feature type="domain" description="RRM 2" evidence="2">
    <location>
        <begin position="656"/>
        <end position="730"/>
    </location>
</feature>
<feature type="domain" description="RRM 3" evidence="2">
    <location>
        <begin position="734"/>
        <end position="806"/>
    </location>
</feature>
<feature type="domain" description="SPOC" evidence="3">
    <location>
        <begin position="5393"/>
        <end position="5560"/>
    </location>
</feature>
<feature type="region of interest" description="Disordered" evidence="4">
    <location>
        <begin position="42"/>
        <end position="72"/>
    </location>
</feature>
<feature type="region of interest" description="Disordered" evidence="4">
    <location>
        <begin position="114"/>
        <end position="145"/>
    </location>
</feature>
<feature type="region of interest" description="Disordered" evidence="4">
    <location>
        <begin position="166"/>
        <end position="204"/>
    </location>
</feature>
<feature type="region of interest" description="Disordered" evidence="4">
    <location>
        <begin position="236"/>
        <end position="287"/>
    </location>
</feature>
<feature type="region of interest" description="Disordered" evidence="4">
    <location>
        <begin position="326"/>
        <end position="366"/>
    </location>
</feature>
<feature type="region of interest" description="Disordered" evidence="4">
    <location>
        <begin position="425"/>
        <end position="545"/>
    </location>
</feature>
<feature type="region of interest" description="Disordered" evidence="4">
    <location>
        <begin position="814"/>
        <end position="876"/>
    </location>
</feature>
<feature type="region of interest" description="Disordered" evidence="4">
    <location>
        <begin position="1027"/>
        <end position="1054"/>
    </location>
</feature>
<feature type="region of interest" description="Disordered" evidence="4">
    <location>
        <begin position="1089"/>
        <end position="1114"/>
    </location>
</feature>
<feature type="region of interest" description="Disordered" evidence="4">
    <location>
        <begin position="1131"/>
        <end position="1150"/>
    </location>
</feature>
<feature type="region of interest" description="Disordered" evidence="4">
    <location>
        <begin position="1196"/>
        <end position="1298"/>
    </location>
</feature>
<feature type="region of interest" description="Disordered" evidence="4">
    <location>
        <begin position="1386"/>
        <end position="1521"/>
    </location>
</feature>
<feature type="region of interest" description="Disordered" evidence="4">
    <location>
        <begin position="1640"/>
        <end position="2428"/>
    </location>
</feature>
<feature type="region of interest" description="Disordered" evidence="4">
    <location>
        <begin position="2450"/>
        <end position="2537"/>
    </location>
</feature>
<feature type="region of interest" description="Disordered" evidence="4">
    <location>
        <begin position="2565"/>
        <end position="2637"/>
    </location>
</feature>
<feature type="region of interest" description="Disordered" evidence="4">
    <location>
        <begin position="2665"/>
        <end position="2695"/>
    </location>
</feature>
<feature type="region of interest" description="Disordered" evidence="4">
    <location>
        <begin position="2736"/>
        <end position="2832"/>
    </location>
</feature>
<feature type="region of interest" description="Disordered" evidence="4">
    <location>
        <begin position="2844"/>
        <end position="3215"/>
    </location>
</feature>
<feature type="region of interest" description="Disordered" evidence="4">
    <location>
        <begin position="3257"/>
        <end position="3313"/>
    </location>
</feature>
<feature type="region of interest" description="Disordered" evidence="4">
    <location>
        <begin position="3341"/>
        <end position="3487"/>
    </location>
</feature>
<feature type="region of interest" description="Disordered" evidence="4">
    <location>
        <begin position="3572"/>
        <end position="3597"/>
    </location>
</feature>
<feature type="region of interest" description="Disordered" evidence="4">
    <location>
        <begin position="3673"/>
        <end position="3750"/>
    </location>
</feature>
<feature type="region of interest" description="Disordered" evidence="4">
    <location>
        <begin position="3787"/>
        <end position="3807"/>
    </location>
</feature>
<feature type="region of interest" description="Disordered" evidence="4">
    <location>
        <begin position="3821"/>
        <end position="4024"/>
    </location>
</feature>
<feature type="region of interest" description="Disordered" evidence="4">
    <location>
        <begin position="4036"/>
        <end position="4075"/>
    </location>
</feature>
<feature type="region of interest" description="Disordered" evidence="4">
    <location>
        <begin position="4098"/>
        <end position="4138"/>
    </location>
</feature>
<feature type="region of interest" description="Disordered" evidence="4">
    <location>
        <begin position="4248"/>
        <end position="4306"/>
    </location>
</feature>
<feature type="region of interest" description="Disordered" evidence="4">
    <location>
        <begin position="4426"/>
        <end position="4453"/>
    </location>
</feature>
<feature type="region of interest" description="Disordered" evidence="4">
    <location>
        <begin position="4471"/>
        <end position="4558"/>
    </location>
</feature>
<feature type="region of interest" description="Disordered" evidence="4">
    <location>
        <begin position="4723"/>
        <end position="4771"/>
    </location>
</feature>
<feature type="region of interest" description="Disordered" evidence="4">
    <location>
        <begin position="4920"/>
        <end position="4963"/>
    </location>
</feature>
<feature type="region of interest" description="Disordered" evidence="4">
    <location>
        <begin position="4984"/>
        <end position="5009"/>
    </location>
</feature>
<feature type="region of interest" description="Disordered" evidence="4">
    <location>
        <begin position="5176"/>
        <end position="5197"/>
    </location>
</feature>
<feature type="region of interest" description="Disordered" evidence="4">
    <location>
        <begin position="5220"/>
        <end position="5241"/>
    </location>
</feature>
<feature type="coiled-coil region" evidence="1">
    <location>
        <begin position="1449"/>
        <end position="1465"/>
    </location>
</feature>
<feature type="coiled-coil region" evidence="1">
    <location>
        <begin position="1902"/>
        <end position="2071"/>
    </location>
</feature>
<feature type="coiled-coil region" evidence="1">
    <location>
        <begin position="2732"/>
        <end position="2760"/>
    </location>
</feature>
<feature type="coiled-coil region" evidence="1">
    <location>
        <begin position="2925"/>
        <end position="2957"/>
    </location>
</feature>
<feature type="coiled-coil region" evidence="1">
    <location>
        <begin position="3026"/>
        <end position="3063"/>
    </location>
</feature>
<feature type="coiled-coil region" evidence="1">
    <location>
        <begin position="3905"/>
        <end position="3965"/>
    </location>
</feature>
<feature type="coiled-coil region" evidence="1">
    <location>
        <begin position="4465"/>
        <end position="4486"/>
    </location>
</feature>
<feature type="compositionally biased region" description="Low complexity" evidence="4">
    <location>
        <begin position="44"/>
        <end position="55"/>
    </location>
</feature>
<feature type="compositionally biased region" description="Basic and acidic residues" evidence="4">
    <location>
        <begin position="120"/>
        <end position="129"/>
    </location>
</feature>
<feature type="compositionally biased region" description="Gly residues" evidence="4">
    <location>
        <begin position="166"/>
        <end position="177"/>
    </location>
</feature>
<feature type="compositionally biased region" description="Polar residues" evidence="4">
    <location>
        <begin position="185"/>
        <end position="197"/>
    </location>
</feature>
<feature type="compositionally biased region" description="Low complexity" evidence="4">
    <location>
        <begin position="272"/>
        <end position="287"/>
    </location>
</feature>
<feature type="compositionally biased region" description="Low complexity" evidence="4">
    <location>
        <begin position="339"/>
        <end position="366"/>
    </location>
</feature>
<feature type="compositionally biased region" description="Low complexity" evidence="4">
    <location>
        <begin position="440"/>
        <end position="480"/>
    </location>
</feature>
<feature type="compositionally biased region" description="Low complexity" evidence="4">
    <location>
        <begin position="491"/>
        <end position="516"/>
    </location>
</feature>
<feature type="compositionally biased region" description="Low complexity" evidence="4">
    <location>
        <begin position="524"/>
        <end position="539"/>
    </location>
</feature>
<feature type="compositionally biased region" description="Low complexity" evidence="4">
    <location>
        <begin position="833"/>
        <end position="851"/>
    </location>
</feature>
<feature type="compositionally biased region" description="Polar residues" evidence="4">
    <location>
        <begin position="852"/>
        <end position="864"/>
    </location>
</feature>
<feature type="compositionally biased region" description="Low complexity" evidence="4">
    <location>
        <begin position="867"/>
        <end position="876"/>
    </location>
</feature>
<feature type="compositionally biased region" description="Gly residues" evidence="4">
    <location>
        <begin position="1028"/>
        <end position="1037"/>
    </location>
</feature>
<feature type="compositionally biased region" description="Polar residues" evidence="4">
    <location>
        <begin position="1096"/>
        <end position="1111"/>
    </location>
</feature>
<feature type="compositionally biased region" description="Low complexity" evidence="4">
    <location>
        <begin position="1217"/>
        <end position="1237"/>
    </location>
</feature>
<feature type="compositionally biased region" description="Basic residues" evidence="4">
    <location>
        <begin position="1245"/>
        <end position="1258"/>
    </location>
</feature>
<feature type="compositionally biased region" description="Basic and acidic residues" evidence="4">
    <location>
        <begin position="1278"/>
        <end position="1298"/>
    </location>
</feature>
<feature type="compositionally biased region" description="Low complexity" evidence="4">
    <location>
        <begin position="1386"/>
        <end position="1438"/>
    </location>
</feature>
<feature type="compositionally biased region" description="Basic and acidic residues" evidence="4">
    <location>
        <begin position="1450"/>
        <end position="1462"/>
    </location>
</feature>
<feature type="compositionally biased region" description="Polar residues" evidence="4">
    <location>
        <begin position="1476"/>
        <end position="1501"/>
    </location>
</feature>
<feature type="compositionally biased region" description="Low complexity" evidence="4">
    <location>
        <begin position="1502"/>
        <end position="1521"/>
    </location>
</feature>
<feature type="compositionally biased region" description="Low complexity" evidence="4">
    <location>
        <begin position="1675"/>
        <end position="1703"/>
    </location>
</feature>
<feature type="compositionally biased region" description="Pro residues" evidence="4">
    <location>
        <begin position="1711"/>
        <end position="1734"/>
    </location>
</feature>
<feature type="compositionally biased region" description="Polar residues" evidence="4">
    <location>
        <begin position="1740"/>
        <end position="1791"/>
    </location>
</feature>
<feature type="compositionally biased region" description="Low complexity" evidence="4">
    <location>
        <begin position="1792"/>
        <end position="1818"/>
    </location>
</feature>
<feature type="compositionally biased region" description="Low complexity" evidence="4">
    <location>
        <begin position="1838"/>
        <end position="1853"/>
    </location>
</feature>
<feature type="compositionally biased region" description="Basic and acidic residues" evidence="4">
    <location>
        <begin position="1913"/>
        <end position="2079"/>
    </location>
</feature>
<feature type="compositionally biased region" description="Polar residues" evidence="4">
    <location>
        <begin position="2114"/>
        <end position="2128"/>
    </location>
</feature>
<feature type="compositionally biased region" description="Basic residues" evidence="4">
    <location>
        <begin position="2133"/>
        <end position="2150"/>
    </location>
</feature>
<feature type="compositionally biased region" description="Basic and acidic residues" evidence="4">
    <location>
        <begin position="2172"/>
        <end position="2183"/>
    </location>
</feature>
<feature type="compositionally biased region" description="Polar residues" evidence="4">
    <location>
        <begin position="2184"/>
        <end position="2197"/>
    </location>
</feature>
<feature type="compositionally biased region" description="Basic and acidic residues" evidence="4">
    <location>
        <begin position="2198"/>
        <end position="2218"/>
    </location>
</feature>
<feature type="compositionally biased region" description="Basic residues" evidence="4">
    <location>
        <begin position="2236"/>
        <end position="2248"/>
    </location>
</feature>
<feature type="compositionally biased region" description="Polar residues" evidence="4">
    <location>
        <begin position="2249"/>
        <end position="2260"/>
    </location>
</feature>
<feature type="compositionally biased region" description="Polar residues" evidence="4">
    <location>
        <begin position="2267"/>
        <end position="2276"/>
    </location>
</feature>
<feature type="compositionally biased region" description="Basic and acidic residues" evidence="4">
    <location>
        <begin position="2286"/>
        <end position="2296"/>
    </location>
</feature>
<feature type="compositionally biased region" description="Basic residues" evidence="4">
    <location>
        <begin position="2304"/>
        <end position="2321"/>
    </location>
</feature>
<feature type="compositionally biased region" description="Low complexity" evidence="4">
    <location>
        <begin position="2345"/>
        <end position="2359"/>
    </location>
</feature>
<feature type="compositionally biased region" description="Basic residues" evidence="4">
    <location>
        <begin position="2366"/>
        <end position="2376"/>
    </location>
</feature>
<feature type="compositionally biased region" description="Basic and acidic residues" evidence="4">
    <location>
        <begin position="2377"/>
        <end position="2389"/>
    </location>
</feature>
<feature type="compositionally biased region" description="Basic and acidic residues" evidence="4">
    <location>
        <begin position="2511"/>
        <end position="2526"/>
    </location>
</feature>
<feature type="compositionally biased region" description="Basic residues" evidence="4">
    <location>
        <begin position="2565"/>
        <end position="2574"/>
    </location>
</feature>
<feature type="compositionally biased region" description="Polar residues" evidence="4">
    <location>
        <begin position="2575"/>
        <end position="2592"/>
    </location>
</feature>
<feature type="compositionally biased region" description="Basic and acidic residues" evidence="4">
    <location>
        <begin position="2609"/>
        <end position="2637"/>
    </location>
</feature>
<feature type="compositionally biased region" description="Basic residues" evidence="4">
    <location>
        <begin position="2670"/>
        <end position="2681"/>
    </location>
</feature>
<feature type="compositionally biased region" description="Low complexity" evidence="4">
    <location>
        <begin position="2682"/>
        <end position="2693"/>
    </location>
</feature>
<feature type="compositionally biased region" description="Basic residues" evidence="4">
    <location>
        <begin position="2739"/>
        <end position="2752"/>
    </location>
</feature>
<feature type="compositionally biased region" description="Polar residues" evidence="4">
    <location>
        <begin position="2757"/>
        <end position="2770"/>
    </location>
</feature>
<feature type="compositionally biased region" description="Basic and acidic residues" evidence="4">
    <location>
        <begin position="2771"/>
        <end position="2781"/>
    </location>
</feature>
<feature type="compositionally biased region" description="Polar residues" evidence="4">
    <location>
        <begin position="2792"/>
        <end position="2807"/>
    </location>
</feature>
<feature type="compositionally biased region" description="Low complexity" evidence="4">
    <location>
        <begin position="2808"/>
        <end position="2828"/>
    </location>
</feature>
<feature type="compositionally biased region" description="Polar residues" evidence="4">
    <location>
        <begin position="2863"/>
        <end position="2888"/>
    </location>
</feature>
<feature type="compositionally biased region" description="Basic residues" evidence="4">
    <location>
        <begin position="2927"/>
        <end position="2940"/>
    </location>
</feature>
<feature type="compositionally biased region" description="Basic and acidic residues" evidence="4">
    <location>
        <begin position="3003"/>
        <end position="3012"/>
    </location>
</feature>
<feature type="compositionally biased region" description="Basic residues" evidence="4">
    <location>
        <begin position="3036"/>
        <end position="3045"/>
    </location>
</feature>
<feature type="compositionally biased region" description="Basic and acidic residues" evidence="4">
    <location>
        <begin position="3046"/>
        <end position="3062"/>
    </location>
</feature>
<feature type="compositionally biased region" description="Basic and acidic residues" evidence="4">
    <location>
        <begin position="3088"/>
        <end position="3098"/>
    </location>
</feature>
<feature type="compositionally biased region" description="Polar residues" evidence="4">
    <location>
        <begin position="3159"/>
        <end position="3181"/>
    </location>
</feature>
<feature type="compositionally biased region" description="Low complexity" evidence="4">
    <location>
        <begin position="3182"/>
        <end position="3201"/>
    </location>
</feature>
<feature type="compositionally biased region" description="Basic and acidic residues" evidence="4">
    <location>
        <begin position="3270"/>
        <end position="3280"/>
    </location>
</feature>
<feature type="compositionally biased region" description="Acidic residues" evidence="4">
    <location>
        <begin position="3367"/>
        <end position="3387"/>
    </location>
</feature>
<feature type="compositionally biased region" description="Basic and acidic residues" evidence="4">
    <location>
        <begin position="3396"/>
        <end position="3416"/>
    </location>
</feature>
<feature type="compositionally biased region" description="Acidic residues" evidence="4">
    <location>
        <begin position="3417"/>
        <end position="3429"/>
    </location>
</feature>
<feature type="compositionally biased region" description="Low complexity" evidence="4">
    <location>
        <begin position="3443"/>
        <end position="3456"/>
    </location>
</feature>
<feature type="compositionally biased region" description="Polar residues" evidence="4">
    <location>
        <begin position="3469"/>
        <end position="3485"/>
    </location>
</feature>
<feature type="compositionally biased region" description="Polar residues" evidence="4">
    <location>
        <begin position="3574"/>
        <end position="3597"/>
    </location>
</feature>
<feature type="compositionally biased region" description="Low complexity" evidence="4">
    <location>
        <begin position="3679"/>
        <end position="3694"/>
    </location>
</feature>
<feature type="compositionally biased region" description="Polar residues" evidence="4">
    <location>
        <begin position="3695"/>
        <end position="3735"/>
    </location>
</feature>
<feature type="compositionally biased region" description="Low complexity" evidence="4">
    <location>
        <begin position="3736"/>
        <end position="3747"/>
    </location>
</feature>
<feature type="compositionally biased region" description="Low complexity" evidence="4">
    <location>
        <begin position="3827"/>
        <end position="3963"/>
    </location>
</feature>
<feature type="compositionally biased region" description="Polar residues" evidence="4">
    <location>
        <begin position="3965"/>
        <end position="3974"/>
    </location>
</feature>
<feature type="compositionally biased region" description="Polar residues" evidence="4">
    <location>
        <begin position="3982"/>
        <end position="3996"/>
    </location>
</feature>
<feature type="compositionally biased region" description="Low complexity" evidence="4">
    <location>
        <begin position="4002"/>
        <end position="4015"/>
    </location>
</feature>
<feature type="compositionally biased region" description="Low complexity" evidence="4">
    <location>
        <begin position="4039"/>
        <end position="4058"/>
    </location>
</feature>
<feature type="compositionally biased region" description="Polar residues" evidence="4">
    <location>
        <begin position="4064"/>
        <end position="4075"/>
    </location>
</feature>
<feature type="compositionally biased region" description="Polar residues" evidence="4">
    <location>
        <begin position="4098"/>
        <end position="4117"/>
    </location>
</feature>
<feature type="compositionally biased region" description="Basic residues" evidence="4">
    <location>
        <begin position="4288"/>
        <end position="4299"/>
    </location>
</feature>
<feature type="compositionally biased region" description="Basic and acidic residues" evidence="4">
    <location>
        <begin position="4426"/>
        <end position="4437"/>
    </location>
</feature>
<feature type="compositionally biased region" description="Polar residues" evidence="4">
    <location>
        <begin position="4483"/>
        <end position="4502"/>
    </location>
</feature>
<feature type="compositionally biased region" description="Basic and acidic residues" evidence="4">
    <location>
        <begin position="4507"/>
        <end position="4517"/>
    </location>
</feature>
<feature type="compositionally biased region" description="Low complexity" evidence="4">
    <location>
        <begin position="4755"/>
        <end position="4771"/>
    </location>
</feature>
<feature type="compositionally biased region" description="Low complexity" evidence="4">
    <location>
        <begin position="4984"/>
        <end position="5001"/>
    </location>
</feature>
<feature type="modified residue" description="Phosphoserine" evidence="10">
    <location>
        <position position="1174"/>
    </location>
</feature>
<feature type="modified residue" description="Phosphoserine" evidence="10">
    <location>
        <position position="1596"/>
    </location>
</feature>
<feature type="modified residue" description="Phosphoserine" evidence="10">
    <location>
        <position position="1600"/>
    </location>
</feature>
<feature type="modified residue" description="Phosphoserine" evidence="10">
    <location>
        <position position="1907"/>
    </location>
</feature>
<feature type="modified residue" description="Phosphoserine" evidence="10">
    <location>
        <position position="1908"/>
    </location>
</feature>
<feature type="modified residue" description="Phosphothreonine" evidence="10">
    <location>
        <position position="2276"/>
    </location>
</feature>
<feature type="modified residue" description="Phosphoserine" evidence="10">
    <location>
        <position position="2277"/>
    </location>
</feature>
<feature type="modified residue" description="Phosphothreonine" evidence="10">
    <location>
        <position position="2329"/>
    </location>
</feature>
<feature type="modified residue" description="Phosphoserine" evidence="10">
    <location>
        <position position="2345"/>
    </location>
</feature>
<feature type="modified residue" description="Phosphoserine" evidence="10">
    <location>
        <position position="2349"/>
    </location>
</feature>
<feature type="modified residue" description="Phosphoserine" evidence="10">
    <location>
        <position position="2351"/>
    </location>
</feature>
<feature type="modified residue" description="Phosphoserine" evidence="10">
    <location>
        <position position="2403"/>
    </location>
</feature>
<feature type="modified residue" description="Phosphoserine" evidence="10">
    <location>
        <position position="2404"/>
    </location>
</feature>
<feature type="modified residue" description="Phosphoserine" evidence="10">
    <location>
        <position position="2407"/>
    </location>
</feature>
<feature type="modified residue" description="Phosphothreonine" evidence="10">
    <location>
        <position position="2410"/>
    </location>
</feature>
<feature type="modified residue" description="Phosphoserine" evidence="10">
    <location>
        <position position="2476"/>
    </location>
</feature>
<feature type="modified residue" description="Phosphothreonine" evidence="10">
    <location>
        <position position="2478"/>
    </location>
</feature>
<feature type="modified residue" description="Phosphoserine" evidence="10">
    <location>
        <position position="2501"/>
    </location>
</feature>
<feature type="modified residue" description="Phosphoserine" evidence="10">
    <location>
        <position position="2502"/>
    </location>
</feature>
<feature type="modified residue" description="Phosphoserine" evidence="10">
    <location>
        <position position="2503"/>
    </location>
</feature>
<feature type="modified residue" description="Phosphoserine" evidence="10">
    <location>
        <position position="2517"/>
    </location>
</feature>
<feature type="modified residue" description="Phosphoserine" evidence="10">
    <location>
        <position position="2518"/>
    </location>
</feature>
<feature type="modified residue" description="Phosphoserine" evidence="10">
    <location>
        <position position="2520"/>
    </location>
</feature>
<feature type="modified residue" description="Phosphoserine" evidence="10">
    <location>
        <position position="2557"/>
    </location>
</feature>
<feature type="modified residue" description="Phosphoserine" evidence="10">
    <location>
        <position position="2558"/>
    </location>
</feature>
<feature type="modified residue" description="Phosphoserine" evidence="10">
    <location>
        <position position="2584"/>
    </location>
</feature>
<feature type="modified residue" description="Phosphoserine" evidence="10">
    <location>
        <position position="2586"/>
    </location>
</feature>
<feature type="modified residue" description="Phosphoserine" evidence="10">
    <location>
        <position position="2588"/>
    </location>
</feature>
<feature type="modified residue" description="Phosphoserine" evidence="10">
    <location>
        <position position="3011"/>
    </location>
</feature>
<feature type="modified residue" description="Phosphoserine" evidence="10">
    <location>
        <position position="3018"/>
    </location>
</feature>
<feature type="modified residue" description="Phosphothreonine" evidence="10">
    <location>
        <position position="3125"/>
    </location>
</feature>
<feature type="modified residue" description="Phosphothreonine" evidence="10">
    <location>
        <position position="3408"/>
    </location>
</feature>
<feature type="modified residue" description="Phosphoserine" evidence="10">
    <location>
        <position position="3411"/>
    </location>
</feature>
<feature type="modified residue" description="Phosphoserine" evidence="10">
    <location>
        <position position="3650"/>
    </location>
</feature>
<feature type="modified residue" description="Phosphoserine" evidence="10">
    <location>
        <position position="3653"/>
    </location>
</feature>
<feature type="modified residue" description="Phosphoserine" evidence="10">
    <location>
        <position position="3657"/>
    </location>
</feature>
<feature type="modified residue" description="Phosphoserine" evidence="10">
    <location>
        <position position="3672"/>
    </location>
</feature>
<feature type="modified residue" description="Phosphoserine" evidence="10">
    <location>
        <position position="3707"/>
    </location>
</feature>
<feature type="modified residue" description="Phosphoserine" evidence="10">
    <location>
        <position position="4938"/>
    </location>
</feature>
<feature type="splice variant" id="VSP_008565" description="In isoform 2 and isoform 4." evidence="11 12">
    <location>
        <begin position="1"/>
        <end position="57"/>
    </location>
</feature>
<feature type="splice variant" id="VSP_008566" description="In isoform 2 and isoform 4." evidence="11 12">
    <original>LK</original>
    <variation>MR</variation>
    <location>
        <begin position="58"/>
        <end position="59"/>
    </location>
</feature>
<feature type="splice variant" id="VSP_008567" description="In isoform 3 and isoform 4." evidence="11 12">
    <location>
        <begin position="5167"/>
        <end position="5193"/>
    </location>
</feature>
<feature type="mutagenesis site" description="In E9; induces head-like skeletal structures in the trunk.">
    <original>C</original>
    <variation>Y</variation>
    <location>
        <position position="5471"/>
    </location>
</feature>
<feature type="mutagenesis site" description="In D57; induces head-like skeletal structures in the trunk.">
    <original>G</original>
    <variation>D</variation>
    <location>
        <position position="5507"/>
    </location>
</feature>
<feature type="sequence conflict" description="In Ref. 1." evidence="13" ref="1">
    <original>Q</original>
    <variation>P</variation>
    <location>
        <position position="4074"/>
    </location>
</feature>
<organism>
    <name type="scientific">Drosophila melanogaster</name>
    <name type="common">Fruit fly</name>
    <dbReference type="NCBI Taxonomy" id="7227"/>
    <lineage>
        <taxon>Eukaryota</taxon>
        <taxon>Metazoa</taxon>
        <taxon>Ecdysozoa</taxon>
        <taxon>Arthropoda</taxon>
        <taxon>Hexapoda</taxon>
        <taxon>Insecta</taxon>
        <taxon>Pterygota</taxon>
        <taxon>Neoptera</taxon>
        <taxon>Endopterygota</taxon>
        <taxon>Diptera</taxon>
        <taxon>Brachycera</taxon>
        <taxon>Muscomorpha</taxon>
        <taxon>Ephydroidea</taxon>
        <taxon>Drosophilidae</taxon>
        <taxon>Drosophila</taxon>
        <taxon>Sophophora</taxon>
    </lineage>
</organism>
<dbReference type="EMBL" id="AF188205">
    <property type="protein sequence ID" value="AAF13218.1"/>
    <property type="molecule type" value="mRNA"/>
</dbReference>
<dbReference type="EMBL" id="AF184612">
    <property type="protein sequence ID" value="AAF26299.1"/>
    <property type="molecule type" value="mRNA"/>
</dbReference>
<dbReference type="EMBL" id="AF221715">
    <property type="protein sequence ID" value="AAF34661.1"/>
    <property type="status" value="ALT_INIT"/>
    <property type="molecule type" value="mRNA"/>
</dbReference>
<dbReference type="EMBL" id="AE014134">
    <property type="protein sequence ID" value="AAF51534.2"/>
    <property type="molecule type" value="Genomic_DNA"/>
</dbReference>
<dbReference type="EMBL" id="AE014134">
    <property type="protein sequence ID" value="AAF51535.2"/>
    <property type="molecule type" value="Genomic_DNA"/>
</dbReference>
<dbReference type="EMBL" id="AE014134">
    <property type="protein sequence ID" value="AAN10511.1"/>
    <property type="molecule type" value="Genomic_DNA"/>
</dbReference>
<dbReference type="EMBL" id="AY094788">
    <property type="protein sequence ID" value="AAM11141.1"/>
    <property type="status" value="ALT_SEQ"/>
    <property type="molecule type" value="mRNA"/>
</dbReference>
<dbReference type="RefSeq" id="NP_524718.2">
    <molecule id="Q8SX83-3"/>
    <property type="nucleotide sequence ID" value="NM_079979.5"/>
</dbReference>
<dbReference type="RefSeq" id="NP_722615.1">
    <molecule id="Q8SX83-1"/>
    <property type="nucleotide sequence ID" value="NM_164374.3"/>
</dbReference>
<dbReference type="RefSeq" id="NP_722616.1">
    <molecule id="Q8SX83-4"/>
    <property type="nucleotide sequence ID" value="NM_164375.3"/>
</dbReference>
<dbReference type="SMR" id="Q8SX83"/>
<dbReference type="BioGRID" id="68897">
    <property type="interactions" value="28"/>
</dbReference>
<dbReference type="FunCoup" id="Q8SX83">
    <property type="interactions" value="670"/>
</dbReference>
<dbReference type="IntAct" id="Q8SX83">
    <property type="interactions" value="7"/>
</dbReference>
<dbReference type="STRING" id="7227.FBpp0077781"/>
<dbReference type="GlyGen" id="Q8SX83">
    <property type="glycosylation" value="12 sites"/>
</dbReference>
<dbReference type="iPTMnet" id="Q8SX83"/>
<dbReference type="PaxDb" id="7227-FBpp0077781"/>
<dbReference type="EnsemblMetazoa" id="FBtr0078121">
    <molecule id="Q8SX83-3"/>
    <property type="protein sequence ID" value="FBpp0077780"/>
    <property type="gene ID" value="FBgn0016977"/>
</dbReference>
<dbReference type="EnsemblMetazoa" id="FBtr0078122">
    <molecule id="Q8SX83-1"/>
    <property type="protein sequence ID" value="FBpp0077781"/>
    <property type="gene ID" value="FBgn0016977"/>
</dbReference>
<dbReference type="EnsemblMetazoa" id="FBtr0078123">
    <molecule id="Q8SX83-4"/>
    <property type="protein sequence ID" value="FBpp0077782"/>
    <property type="gene ID" value="FBgn0016977"/>
</dbReference>
<dbReference type="GeneID" id="44205"/>
<dbReference type="KEGG" id="dme:Dmel_CG18497"/>
<dbReference type="AGR" id="FB:FBgn0016977"/>
<dbReference type="CTD" id="23013"/>
<dbReference type="FlyBase" id="FBgn0016977">
    <property type="gene designation" value="spen"/>
</dbReference>
<dbReference type="VEuPathDB" id="VectorBase:FBgn0016977"/>
<dbReference type="eggNOG" id="KOG0112">
    <property type="taxonomic scope" value="Eukaryota"/>
</dbReference>
<dbReference type="GeneTree" id="ENSGT00940000157087"/>
<dbReference type="HOGENOM" id="CLU_223086_0_0_1"/>
<dbReference type="InParanoid" id="Q8SX83"/>
<dbReference type="OMA" id="SNVMANC"/>
<dbReference type="OrthoDB" id="6407164at2759"/>
<dbReference type="PhylomeDB" id="Q8SX83"/>
<dbReference type="Reactome" id="R-DME-9013422">
    <property type="pathway name" value="RHOBTB1 GTPase cycle"/>
</dbReference>
<dbReference type="SignaLink" id="Q8SX83"/>
<dbReference type="BioGRID-ORCS" id="44205">
    <property type="hits" value="0 hits in 1 CRISPR screen"/>
</dbReference>
<dbReference type="ChiTaRS" id="spen">
    <property type="organism name" value="fly"/>
</dbReference>
<dbReference type="GenomeRNAi" id="44205"/>
<dbReference type="PRO" id="PR:Q8SX83"/>
<dbReference type="Proteomes" id="UP000000803">
    <property type="component" value="Chromosome 2L"/>
</dbReference>
<dbReference type="Bgee" id="FBgn0016977">
    <property type="expression patterns" value="Expressed in spermatogonium in testis and 295 other cell types or tissues"/>
</dbReference>
<dbReference type="ExpressionAtlas" id="Q8SX83">
    <property type="expression patterns" value="baseline and differential"/>
</dbReference>
<dbReference type="GO" id="GO:0005634">
    <property type="term" value="C:nucleus"/>
    <property type="evidence" value="ECO:0000314"/>
    <property type="project" value="UniProtKB"/>
</dbReference>
<dbReference type="GO" id="GO:0003729">
    <property type="term" value="F:mRNA binding"/>
    <property type="evidence" value="ECO:0000318"/>
    <property type="project" value="GO_Central"/>
</dbReference>
<dbReference type="GO" id="GO:0007411">
    <property type="term" value="P:axon guidance"/>
    <property type="evidence" value="ECO:0000315"/>
    <property type="project" value="UniProtKB"/>
</dbReference>
<dbReference type="GO" id="GO:0048749">
    <property type="term" value="P:compound eye development"/>
    <property type="evidence" value="ECO:0000315"/>
    <property type="project" value="FlyBase"/>
</dbReference>
<dbReference type="GO" id="GO:0048106">
    <property type="term" value="P:establishment of thoracic bristle planar orientation"/>
    <property type="evidence" value="ECO:0000315"/>
    <property type="project" value="FlyBase"/>
</dbReference>
<dbReference type="GO" id="GO:0007403">
    <property type="term" value="P:glial cell fate determination"/>
    <property type="evidence" value="ECO:0000315"/>
    <property type="project" value="UniProtKB"/>
</dbReference>
<dbReference type="GO" id="GO:0008586">
    <property type="term" value="P:imaginal disc-derived wing vein morphogenesis"/>
    <property type="evidence" value="ECO:0000315"/>
    <property type="project" value="FlyBase"/>
</dbReference>
<dbReference type="GO" id="GO:0035321">
    <property type="term" value="P:maintenance of imaginal disc-derived wing hair orientation"/>
    <property type="evidence" value="ECO:0000315"/>
    <property type="project" value="FlyBase"/>
</dbReference>
<dbReference type="GO" id="GO:0007400">
    <property type="term" value="P:neuroblast fate determination"/>
    <property type="evidence" value="ECO:0000315"/>
    <property type="project" value="UniProtKB"/>
</dbReference>
<dbReference type="GO" id="GO:0007422">
    <property type="term" value="P:peripheral nervous system development"/>
    <property type="evidence" value="ECO:0000315"/>
    <property type="project" value="FlyBase"/>
</dbReference>
<dbReference type="GO" id="GO:0090263">
    <property type="term" value="P:positive regulation of canonical Wnt signaling pathway"/>
    <property type="evidence" value="ECO:0000315"/>
    <property type="project" value="UniProtKB"/>
</dbReference>
<dbReference type="GO" id="GO:0006355">
    <property type="term" value="P:regulation of DNA-templated transcription"/>
    <property type="evidence" value="ECO:0000315"/>
    <property type="project" value="UniProtKB"/>
</dbReference>
<dbReference type="GO" id="GO:0006357">
    <property type="term" value="P:regulation of transcription by RNA polymerase II"/>
    <property type="evidence" value="ECO:0000318"/>
    <property type="project" value="GO_Central"/>
</dbReference>
<dbReference type="GO" id="GO:0007379">
    <property type="term" value="P:segment specification"/>
    <property type="evidence" value="ECO:0000315"/>
    <property type="project" value="UniProtKB"/>
</dbReference>
<dbReference type="GO" id="GO:0035222">
    <property type="term" value="P:wing disc pattern formation"/>
    <property type="evidence" value="ECO:0000315"/>
    <property type="project" value="FlyBase"/>
</dbReference>
<dbReference type="CDD" id="cd12349">
    <property type="entry name" value="RRM2_SHARP"/>
    <property type="match status" value="1"/>
</dbReference>
<dbReference type="CDD" id="cd12350">
    <property type="entry name" value="RRM3_SHARP"/>
    <property type="match status" value="1"/>
</dbReference>
<dbReference type="CDD" id="cd12351">
    <property type="entry name" value="RRM4_SHARP"/>
    <property type="match status" value="1"/>
</dbReference>
<dbReference type="CDD" id="cd21543">
    <property type="entry name" value="SPOC_SHARP"/>
    <property type="match status" value="1"/>
</dbReference>
<dbReference type="FunFam" id="3.30.70.330:FF:000088">
    <property type="entry name" value="msx2-interacting protein-like isoform X1"/>
    <property type="match status" value="1"/>
</dbReference>
<dbReference type="FunFam" id="3.30.70.330:FF:000118">
    <property type="entry name" value="msx2-interacting protein-like isoform X1"/>
    <property type="match status" value="1"/>
</dbReference>
<dbReference type="FunFam" id="2.40.290.10:FF:000002">
    <property type="entry name" value="Spen family transcriptional repressor"/>
    <property type="match status" value="1"/>
</dbReference>
<dbReference type="FunFam" id="3.30.70.330:FF:000258">
    <property type="entry name" value="Split ends, isoform D"/>
    <property type="match status" value="1"/>
</dbReference>
<dbReference type="Gene3D" id="2.40.290.10">
    <property type="match status" value="1"/>
</dbReference>
<dbReference type="Gene3D" id="3.30.70.330">
    <property type="match status" value="3"/>
</dbReference>
<dbReference type="InterPro" id="IPR012677">
    <property type="entry name" value="Nucleotide-bd_a/b_plait_sf"/>
</dbReference>
<dbReference type="InterPro" id="IPR035979">
    <property type="entry name" value="RBD_domain_sf"/>
</dbReference>
<dbReference type="InterPro" id="IPR000504">
    <property type="entry name" value="RRM_dom"/>
</dbReference>
<dbReference type="InterPro" id="IPR034173">
    <property type="entry name" value="SHARP_RRM2"/>
</dbReference>
<dbReference type="InterPro" id="IPR034174">
    <property type="entry name" value="SHARP_RRM3"/>
</dbReference>
<dbReference type="InterPro" id="IPR034175">
    <property type="entry name" value="SHARP_RRM4"/>
</dbReference>
<dbReference type="InterPro" id="IPR016194">
    <property type="entry name" value="SPOC-like_C_dom_sf"/>
</dbReference>
<dbReference type="InterPro" id="IPR010912">
    <property type="entry name" value="SPOC_met"/>
</dbReference>
<dbReference type="PANTHER" id="PTHR23189">
    <property type="entry name" value="RNA RECOGNITION MOTIF-CONTAINING"/>
    <property type="match status" value="1"/>
</dbReference>
<dbReference type="Pfam" id="PF00076">
    <property type="entry name" value="RRM_1"/>
    <property type="match status" value="1"/>
</dbReference>
<dbReference type="SMART" id="SM00360">
    <property type="entry name" value="RRM"/>
    <property type="match status" value="3"/>
</dbReference>
<dbReference type="SUPFAM" id="SSF54928">
    <property type="entry name" value="RNA-binding domain, RBD"/>
    <property type="match status" value="2"/>
</dbReference>
<dbReference type="SUPFAM" id="SSF100939">
    <property type="entry name" value="SPOC domain-like"/>
    <property type="match status" value="1"/>
</dbReference>
<dbReference type="PROSITE" id="PS50102">
    <property type="entry name" value="RRM"/>
    <property type="match status" value="3"/>
</dbReference>
<dbReference type="PROSITE" id="PS50917">
    <property type="entry name" value="SPOC"/>
    <property type="match status" value="1"/>
</dbReference>
<comment type="function">
    <text evidence="5 7 8 9">Probable corepressor protein, which regulates different key pathways such as the EGF receptor and Wg pathways. Involved in neuronal cell fate, survival and axon guidance, cell cycle regulation and repression of head identity in the embryonic trunk. May act with the Hox gene Deformed and the EGF receptor signaling pathway. Positive regulator of the Wg pathway in larval tissues but not in embryonic tissues. May act as a transcriptional corepressor protein, which repress transcription via the recruitment of large complexes containing histone deacetylase proteins.</text>
</comment>
<comment type="subcellular location">
    <subcellularLocation>
        <location evidence="6">Nucleus</location>
    </subcellularLocation>
</comment>
<comment type="alternative products">
    <event type="alternative promoter"/>
    <event type="alternative splicing"/>
    <isoform>
        <id>Q8SX83-1</id>
        <name>1</name>
        <sequence type="displayed"/>
    </isoform>
    <isoform>
        <id>Q8SX83-2</id>
        <name>2</name>
        <sequence type="described" ref="VSP_008565 VSP_008566"/>
    </isoform>
    <isoform>
        <id>Q8SX83-3</id>
        <name>3</name>
        <name>SpenL</name>
        <sequence type="described" ref="VSP_008567"/>
    </isoform>
    <isoform>
        <id>Q8SX83-4</id>
        <name>4</name>
        <name>SpenS</name>
        <sequence type="described" ref="VSP_008565 VSP_008566 VSP_008567"/>
    </isoform>
</comment>
<comment type="tissue specificity">
    <text evidence="5 6">Ubiquitous. Expressed prior to cellularization in stage 3 embryos, and in blastoderm cells, including pole cells. Expressed throughout the rest of embryogenesis. Later, it is expressed at higher level in epidermal cells and CNS.</text>
</comment>
<comment type="developmental stage">
    <text evidence="5">Isoform 3 is expressed both maternally and zygotically.</text>
</comment>
<comment type="miscellaneous">
    <molecule>Isoform 1</molecule>
    <text>Produced by alternative promoter usage.</text>
</comment>
<comment type="miscellaneous">
    <molecule>Isoform 2</molecule>
    <text evidence="13">Produced by alternative promoter usage.</text>
</comment>
<comment type="miscellaneous">
    <molecule>Isoform 3</molecule>
    <text evidence="13">Produced by alternative splicing of isoform 1.</text>
</comment>
<comment type="miscellaneous">
    <molecule>Isoform 4</molecule>
    <text evidence="13">Produced by alternative splicing of isoform 2.</text>
</comment>
<comment type="similarity">
    <text evidence="13">Belongs to the RRM Spen family.</text>
</comment>
<comment type="caution">
    <text evidence="13">It is uncertain whether Met-1 or Met-7 is the initiator.</text>
</comment>
<comment type="sequence caution" evidence="13">
    <conflict type="erroneous initiation">
        <sequence resource="EMBL-CDS" id="AAF34661"/>
    </conflict>
</comment>
<reference key="1">
    <citation type="journal article" date="1999" name="Development">
        <title>spen encodes an RNP motif protein that interacts with Hox pathways to repress the development of head-like sclerites in the Drosophila trunk.</title>
        <authorList>
            <person name="Wiellette E.L."/>
            <person name="Harding K.W."/>
            <person name="Mace K.A."/>
            <person name="Ronshaugen M.R."/>
            <person name="Wang F.Y."/>
            <person name="McGinnis W."/>
        </authorList>
    </citation>
    <scope>NUCLEOTIDE SEQUENCE [MRNA] (ISOFORMS 3 AND 4)</scope>
    <scope>FUNCTION</scope>
    <scope>ALTERNATIVE PROMOTER USAGE</scope>
    <scope>TISSUE SPECIFICITY</scope>
    <scope>DEVELOPMENTAL STAGE</scope>
    <scope>MUTANTS E9 AND D57</scope>
    <source>
        <tissue>Embryo</tissue>
    </source>
</reference>
<reference key="2">
    <citation type="journal article" date="2000" name="Genetics">
        <title>A genetic screen for novel components of the Ras/mitogen-activated protein kinase signaling pathway that interact with the yan gene of Drosophila identifies split ends, a new RNA recognition motif-containing protein.</title>
        <authorList>
            <person name="Rebay I."/>
            <person name="Chen F."/>
            <person name="Hsiao F."/>
            <person name="Kolodziej P.A."/>
            <person name="Kuang B.H."/>
            <person name="Laverty T."/>
            <person name="Suh C."/>
            <person name="Voas M."/>
            <person name="Williams A."/>
            <person name="Rubin G.M."/>
        </authorList>
    </citation>
    <scope>NUCLEOTIDE SEQUENCE [MRNA] (ISOFORM 4)</scope>
    <source>
        <tissue>Embryo</tissue>
    </source>
</reference>
<reference key="3">
    <citation type="journal article" date="2000" name="Development">
        <title>split ends encodes large nuclear proteins that regulate neuronal cell fate and axon extension in the Drosophila embryo.</title>
        <authorList>
            <person name="Kuang B.H."/>
            <person name="Wu S.C.-Y."/>
            <person name="Shin Y.-A."/>
            <person name="Luo L."/>
            <person name="Kolodziej P.A."/>
        </authorList>
    </citation>
    <scope>NUCLEOTIDE SEQUENCE [MRNA] (ISOFORM 1)</scope>
    <scope>SUBCELLULAR LOCATION</scope>
    <scope>TISSUE SPECIFICITY</scope>
    <source>
        <tissue>Embryo</tissue>
    </source>
</reference>
<reference key="4">
    <citation type="journal article" date="2000" name="Science">
        <title>The genome sequence of Drosophila melanogaster.</title>
        <authorList>
            <person name="Adams M.D."/>
            <person name="Celniker S.E."/>
            <person name="Holt R.A."/>
            <person name="Evans C.A."/>
            <person name="Gocayne J.D."/>
            <person name="Amanatides P.G."/>
            <person name="Scherer S.E."/>
            <person name="Li P.W."/>
            <person name="Hoskins R.A."/>
            <person name="Galle R.F."/>
            <person name="George R.A."/>
            <person name="Lewis S.E."/>
            <person name="Richards S."/>
            <person name="Ashburner M."/>
            <person name="Henderson S.N."/>
            <person name="Sutton G.G."/>
            <person name="Wortman J.R."/>
            <person name="Yandell M.D."/>
            <person name="Zhang Q."/>
            <person name="Chen L.X."/>
            <person name="Brandon R.C."/>
            <person name="Rogers Y.-H.C."/>
            <person name="Blazej R.G."/>
            <person name="Champe M."/>
            <person name="Pfeiffer B.D."/>
            <person name="Wan K.H."/>
            <person name="Doyle C."/>
            <person name="Baxter E.G."/>
            <person name="Helt G."/>
            <person name="Nelson C.R."/>
            <person name="Miklos G.L.G."/>
            <person name="Abril J.F."/>
            <person name="Agbayani A."/>
            <person name="An H.-J."/>
            <person name="Andrews-Pfannkoch C."/>
            <person name="Baldwin D."/>
            <person name="Ballew R.M."/>
            <person name="Basu A."/>
            <person name="Baxendale J."/>
            <person name="Bayraktaroglu L."/>
            <person name="Beasley E.M."/>
            <person name="Beeson K.Y."/>
            <person name="Benos P.V."/>
            <person name="Berman B.P."/>
            <person name="Bhandari D."/>
            <person name="Bolshakov S."/>
            <person name="Borkova D."/>
            <person name="Botchan M.R."/>
            <person name="Bouck J."/>
            <person name="Brokstein P."/>
            <person name="Brottier P."/>
            <person name="Burtis K.C."/>
            <person name="Busam D.A."/>
            <person name="Butler H."/>
            <person name="Cadieu E."/>
            <person name="Center A."/>
            <person name="Chandra I."/>
            <person name="Cherry J.M."/>
            <person name="Cawley S."/>
            <person name="Dahlke C."/>
            <person name="Davenport L.B."/>
            <person name="Davies P."/>
            <person name="de Pablos B."/>
            <person name="Delcher A."/>
            <person name="Deng Z."/>
            <person name="Mays A.D."/>
            <person name="Dew I."/>
            <person name="Dietz S.M."/>
            <person name="Dodson K."/>
            <person name="Doup L.E."/>
            <person name="Downes M."/>
            <person name="Dugan-Rocha S."/>
            <person name="Dunkov B.C."/>
            <person name="Dunn P."/>
            <person name="Durbin K.J."/>
            <person name="Evangelista C.C."/>
            <person name="Ferraz C."/>
            <person name="Ferriera S."/>
            <person name="Fleischmann W."/>
            <person name="Fosler C."/>
            <person name="Gabrielian A.E."/>
            <person name="Garg N.S."/>
            <person name="Gelbart W.M."/>
            <person name="Glasser K."/>
            <person name="Glodek A."/>
            <person name="Gong F."/>
            <person name="Gorrell J.H."/>
            <person name="Gu Z."/>
            <person name="Guan P."/>
            <person name="Harris M."/>
            <person name="Harris N.L."/>
            <person name="Harvey D.A."/>
            <person name="Heiman T.J."/>
            <person name="Hernandez J.R."/>
            <person name="Houck J."/>
            <person name="Hostin D."/>
            <person name="Houston K.A."/>
            <person name="Howland T.J."/>
            <person name="Wei M.-H."/>
            <person name="Ibegwam C."/>
            <person name="Jalali M."/>
            <person name="Kalush F."/>
            <person name="Karpen G.H."/>
            <person name="Ke Z."/>
            <person name="Kennison J.A."/>
            <person name="Ketchum K.A."/>
            <person name="Kimmel B.E."/>
            <person name="Kodira C.D."/>
            <person name="Kraft C.L."/>
            <person name="Kravitz S."/>
            <person name="Kulp D."/>
            <person name="Lai Z."/>
            <person name="Lasko P."/>
            <person name="Lei Y."/>
            <person name="Levitsky A.A."/>
            <person name="Li J.H."/>
            <person name="Li Z."/>
            <person name="Liang Y."/>
            <person name="Lin X."/>
            <person name="Liu X."/>
            <person name="Mattei B."/>
            <person name="McIntosh T.C."/>
            <person name="McLeod M.P."/>
            <person name="McPherson D."/>
            <person name="Merkulov G."/>
            <person name="Milshina N.V."/>
            <person name="Mobarry C."/>
            <person name="Morris J."/>
            <person name="Moshrefi A."/>
            <person name="Mount S.M."/>
            <person name="Moy M."/>
            <person name="Murphy B."/>
            <person name="Murphy L."/>
            <person name="Muzny D.M."/>
            <person name="Nelson D.L."/>
            <person name="Nelson D.R."/>
            <person name="Nelson K.A."/>
            <person name="Nixon K."/>
            <person name="Nusskern D.R."/>
            <person name="Pacleb J.M."/>
            <person name="Palazzolo M."/>
            <person name="Pittman G.S."/>
            <person name="Pan S."/>
            <person name="Pollard J."/>
            <person name="Puri V."/>
            <person name="Reese M.G."/>
            <person name="Reinert K."/>
            <person name="Remington K."/>
            <person name="Saunders R.D.C."/>
            <person name="Scheeler F."/>
            <person name="Shen H."/>
            <person name="Shue B.C."/>
            <person name="Siden-Kiamos I."/>
            <person name="Simpson M."/>
            <person name="Skupski M.P."/>
            <person name="Smith T.J."/>
            <person name="Spier E."/>
            <person name="Spradling A.C."/>
            <person name="Stapleton M."/>
            <person name="Strong R."/>
            <person name="Sun E."/>
            <person name="Svirskas R."/>
            <person name="Tector C."/>
            <person name="Turner R."/>
            <person name="Venter E."/>
            <person name="Wang A.H."/>
            <person name="Wang X."/>
            <person name="Wang Z.-Y."/>
            <person name="Wassarman D.A."/>
            <person name="Weinstock G.M."/>
            <person name="Weissenbach J."/>
            <person name="Williams S.M."/>
            <person name="Woodage T."/>
            <person name="Worley K.C."/>
            <person name="Wu D."/>
            <person name="Yang S."/>
            <person name="Yao Q.A."/>
            <person name="Ye J."/>
            <person name="Yeh R.-F."/>
            <person name="Zaveri J.S."/>
            <person name="Zhan M."/>
            <person name="Zhang G."/>
            <person name="Zhao Q."/>
            <person name="Zheng L."/>
            <person name="Zheng X.H."/>
            <person name="Zhong F.N."/>
            <person name="Zhong W."/>
            <person name="Zhou X."/>
            <person name="Zhu S.C."/>
            <person name="Zhu X."/>
            <person name="Smith H.O."/>
            <person name="Gibbs R.A."/>
            <person name="Myers E.W."/>
            <person name="Rubin G.M."/>
            <person name="Venter J.C."/>
        </authorList>
    </citation>
    <scope>NUCLEOTIDE SEQUENCE [LARGE SCALE GENOMIC DNA]</scope>
    <source>
        <strain>Berkeley</strain>
    </source>
</reference>
<reference key="5">
    <citation type="journal article" date="2002" name="Genome Biol.">
        <title>Annotation of the Drosophila melanogaster euchromatic genome: a systematic review.</title>
        <authorList>
            <person name="Misra S."/>
            <person name="Crosby M.A."/>
            <person name="Mungall C.J."/>
            <person name="Matthews B.B."/>
            <person name="Campbell K.S."/>
            <person name="Hradecky P."/>
            <person name="Huang Y."/>
            <person name="Kaminker J.S."/>
            <person name="Millburn G.H."/>
            <person name="Prochnik S.E."/>
            <person name="Smith C.D."/>
            <person name="Tupy J.L."/>
            <person name="Whitfield E.J."/>
            <person name="Bayraktaroglu L."/>
            <person name="Berman B.P."/>
            <person name="Bettencourt B.R."/>
            <person name="Celniker S.E."/>
            <person name="de Grey A.D.N.J."/>
            <person name="Drysdale R.A."/>
            <person name="Harris N.L."/>
            <person name="Richter J."/>
            <person name="Russo S."/>
            <person name="Schroeder A.J."/>
            <person name="Shu S.Q."/>
            <person name="Stapleton M."/>
            <person name="Yamada C."/>
            <person name="Ashburner M."/>
            <person name="Gelbart W.M."/>
            <person name="Rubin G.M."/>
            <person name="Lewis S.E."/>
        </authorList>
    </citation>
    <scope>GENOME REANNOTATION</scope>
    <scope>ALTERNATIVE SPLICING</scope>
    <source>
        <strain>Berkeley</strain>
    </source>
</reference>
<reference key="6">
    <citation type="journal article" date="2002" name="Genome Biol.">
        <title>A Drosophila full-length cDNA resource.</title>
        <authorList>
            <person name="Stapleton M."/>
            <person name="Carlson J.W."/>
            <person name="Brokstein P."/>
            <person name="Yu C."/>
            <person name="Champe M."/>
            <person name="George R.A."/>
            <person name="Guarin H."/>
            <person name="Kronmiller B."/>
            <person name="Pacleb J.M."/>
            <person name="Park S."/>
            <person name="Wan K.H."/>
            <person name="Rubin G.M."/>
            <person name="Celniker S.E."/>
        </authorList>
    </citation>
    <scope>NUCLEOTIDE SEQUENCE [LARGE SCALE MRNA] OF 424-2002</scope>
    <source>
        <strain>Berkeley</strain>
        <tissue>Embryo</tissue>
    </source>
</reference>
<reference key="7">
    <citation type="journal article" date="2000" name="Genetics">
        <title>A screen for modifiers of cyclin E function in Drosophila melanogaster identifies Cdk2 mutations, revealing the insignificance of putative phosphorylation sites in Cdk2.</title>
        <authorList>
            <person name="Lane M.E."/>
            <person name="Elend M."/>
            <person name="Heidmann D."/>
            <person name="Herr A."/>
            <person name="Marzodko S."/>
            <person name="Herzig A."/>
            <person name="Lehner C.F."/>
        </authorList>
    </citation>
    <scope>FUNCTION</scope>
</reference>
<reference key="8">
    <citation type="journal article" date="2000" name="Curr. Biol.">
        <title>split ends, a new component of the Drosophila EGF receptor pathway, regulates development of midline glial cells.</title>
        <authorList>
            <person name="Chen F."/>
            <person name="Rebay I."/>
        </authorList>
    </citation>
    <scope>FUNCTION ON EGF RECEPTOR PATHWAY</scope>
</reference>
<reference key="9">
    <citation type="journal article" date="2003" name="Development">
        <title>Splits ends is a tissue/promoter specific regulator of Wingless signaling.</title>
        <authorList>
            <person name="Lin H.V."/>
            <person name="Doroquez D.B."/>
            <person name="Cho S."/>
            <person name="Chen F."/>
            <person name="Rebay I."/>
            <person name="Cadigan K.M."/>
        </authorList>
    </citation>
    <scope>FUNCTION ON WG PATHWAY</scope>
</reference>
<reference key="10">
    <citation type="journal article" date="2008" name="J. Proteome Res.">
        <title>Phosphoproteome analysis of Drosophila melanogaster embryos.</title>
        <authorList>
            <person name="Zhai B."/>
            <person name="Villen J."/>
            <person name="Beausoleil S.A."/>
            <person name="Mintseris J."/>
            <person name="Gygi S.P."/>
        </authorList>
    </citation>
    <scope>PHOSPHORYLATION [LARGE SCALE ANALYSIS] AT SER-1174; SER-1596; SER-1600; SER-1907; SER-1908; THR-2276; SER-2277; THR-2329; SER-2345; SER-2349; SER-2351; SER-2403; SER-2404; SER-2407; THR-2410; SER-2476; THR-2478; SER-2501; SER-2502; SER-2503; SER-2517; SER-2518; SER-2520; SER-2557; SER-2558; SER-2584; SER-2586; SER-2588; SER-3011; SER-3018; THR-3125; THR-3408; SER-3411; SER-3650; SER-3653; SER-3657; SER-3672; SER-3707 AND SER-4938</scope>
    <scope>IDENTIFICATION BY MASS SPECTROMETRY</scope>
    <source>
        <tissue>Embryo</tissue>
    </source>
</reference>
<evidence type="ECO:0000255" key="1"/>
<evidence type="ECO:0000255" key="2">
    <source>
        <dbReference type="PROSITE-ProRule" id="PRU00176"/>
    </source>
</evidence>
<evidence type="ECO:0000255" key="3">
    <source>
        <dbReference type="PROSITE-ProRule" id="PRU00249"/>
    </source>
</evidence>
<evidence type="ECO:0000256" key="4">
    <source>
        <dbReference type="SAM" id="MobiDB-lite"/>
    </source>
</evidence>
<evidence type="ECO:0000269" key="5">
    <source>
    </source>
</evidence>
<evidence type="ECO:0000269" key="6">
    <source>
    </source>
</evidence>
<evidence type="ECO:0000269" key="7">
    <source>
    </source>
</evidence>
<evidence type="ECO:0000269" key="8">
    <source>
    </source>
</evidence>
<evidence type="ECO:0000269" key="9">
    <source>
    </source>
</evidence>
<evidence type="ECO:0000269" key="10">
    <source>
    </source>
</evidence>
<evidence type="ECO:0000303" key="11">
    <source>
    </source>
</evidence>
<evidence type="ECO:0000303" key="12">
    <source>
    </source>
</evidence>
<evidence type="ECO:0000305" key="13"/>
<sequence>MFRCRNMVRDNSRNICFGKLAETTTTQQQQQQQQFVVDSSTIINNNNNNNNNNNNQKLKRSTEEPPTNSFERNYYDRTTSRLVTQYQANNSTSLANSNSSPSSVSASASVFATAAGGSSERSRNRDRPYRNGSASVQGGGINSSNTTTTTAACTAGGSGSGAIGTGTGGLVGSGPGGVPQALGDRSSTQNIHQNHQSARVAPPQSWYEAATAATTAQLKSSGGSGNAGASAAVGFTMSSSPINHHPHQHPHLQNPQHPHYTSSPVVGAGSCPSAAQGQPQIQSQSQTTAVHRSVAYAGSAADDLLNTATSRNMLLHSSKLNKLLKGAGATGSGGERSGSESPGRAGGATPLTTTSTITNNSFSSNSLNNTITTATPTMPTIASGAAGSVGLGSGAEAGVCSNSGTASGDILNVAAVLAAAVDNGVPTHPIRTRHNLHGRSTTSSSRSHSRSPSSYSSSHSSSSSSHSSSHSHASSPVQSSGNCAMAEGRSSRTVNSVTVTSNSSNPSGTAVTVSSAGVGGGCGSSSSSSSSSSSSGSSCLTANPVVHSEDNRPLAIRVRNLPARSSDTSLKDGLFHEYKKHGKVTWVKVVGQNSERYALVCFKKPDDVEKALEVSHDKHFFGCKIEVEPYQGYDVEDNEFRPYEAELDEYHPKSTRTLFIGNLEKDITAGELRSHFEAFGEIIEIDIKKQGLNAYAFCQYSDIVSVVKAMRKMDGEHLGSNRIKLGFGKSMPTNCVWIDGVDEKVSESFLQSQFTRFGAVTKVSIDRNRQLALVLYDQVQNAQAAVKDMRGTILRRKKLQVDFASRECQDAFYDKQEKQQQQSSGSNPRFSRYESSASSLQSRSRASSFSRHQNNSNDDCSPINTPGGASSGISSASNLINQSTSINISNIGTNACSAMPAPSLASAVVSCNVNASGTVPASTSMPSGVSSSSSSLPMSPAALAQRHRMVRNARQTVDCDFNEVGRLRFRSSEEVSGGAGNSTQFEDVRCDSPVTARQGSAVNCFTGPTAAVGESIDGTLNNNQITGGAEGFTGSGGSILSRRRCGKTPKDLHPVHNQRIQLAEQVEECPSSGDEGVVSPRKRIKMDYHHHHHHSNASGVESTGEHSSINKPSPLLLSNCDVIHDPLNRKSEIRRVSETPSGSPSIKFPGHLPSAPQSLMLSCRRPSIDVGALSALSSSSAFRHGIVGASSMDQQHMMNASAAAKRRRVTTTMQQPSSSSTTNSSSGSGLGGISSLTPADEYHHHVSRGRGHQLHSHHSHEASGGESADGSRPGTPLCDERPEVLPTEPRRLPPPRERVRERTRDVMWLPLPKFGVLFFQQQQSRSSGGGGAGNSYLQQQLGGGSTGGLGCIGAASSSACSLNNSSLNASQGMGSCSGSTFLPSPSSRYWRSSSHHQNQQNNHQQQSQQLHGSSSSNTCLMASPARPRSLSSNSSDSDVPGQNAGGSPSLDERLRNFEENYERWSGGSSREHISGHTPSSATPSWQLSMHMNLSTGLNSHQTSSASGNSNSSSGTVSSSASNSRHKFLDIDELQPSDIVKSVLAKKSVFDDDFQRLNKNQWYDPSSSDFALGSSSNIVTGSSLVANVSRHPGGPCSGNTSPALPNLAATKATPIIGNCSGGLGNSTGSKSAGLLQRLSSLSPMNSPQASMSPYNSPSPSPSVGGVTACLGQLTKPAAPGTASAGLSGGTAASSSSPAANSGPTKGLQYPFPSHPPLPNTAAPPPAVQPAPPPLPEMGKQSRLTGQSSGNNLTKSLSVPDGPQSSPARVQLQKSASVPGSTNVGAPSSLSLDSTTASVETSASISSSTSNGNSSLTSAAIHVQKPQQSTFVEEEHTKKSGTSTSQSSSSSSKKISSTHDKLHSKHNNRSESDKKIKKSDKNASSSDKRKNSSTSQSSKSATPRIEDDSSEADDTADKAEKNQRHEKEKKERQEKREKDLRKQVEREEKDRKAQQEEREKEDRKAKEEEKEREREKKAQEDREKKEREERELREKEQRDKEQKEKEIREKDLREKEQRERDNREKELRDKDLREKEMREKEQREKELHREKDQREREHREKEQSRRAMDVEQEGRGGRMRELSSYQKSKMDIAGEASSLTAIDCQHNKENAMDTIAQGTPGASPSTPSDNTPKERSRKLSRNSPVRLHKRRLSSQESNHSAGGGGSCGGSSHQIHHEDYVKRIRMENSQNISVHSSNQRLNDRRDSKEHKSSSFKEDKNSSSHISRPHGCGGSSASSSKHHHRRDKHHQKGSASSIETNSSIEVVVDPISQTKHNLNTSEEELQSHQPKREKEREHFSSHANSSSSRHKSKRDHHHHREKKRHSVAESTNTDEEHTPQQHNPHRRISAAGSGSAGELSSAATNTSSGKLHHQHHRRSVERKSSRGSDEGHHSSSKSLRAKLMMLSSADSDDTDDASKKHSIFDIPDDCPNVSMYDKVKARSCKNMQRQAEEKKIKAKFSQLKQSRAKKKRSTSYDGDSDTEFEDRQHRNSGSSSFHGRYPGLSSSDDDDDEETHQRRISSDSDAEHGGQDNQGASTLADANRVRQMQQNLRRLCDGDDSSEDEIRRNVMKHSHFGKRNSNSTRIASDSESQSQPAPDLTIKQEHPIAPAQEIKREQLSDEEQKFKSRHDSNSSIEERKLKTEREIKTELGDFYNSSEYTYTGKLKEYSPETRKKHKKSKRRLKSSSTADTSAAQTPLVMTPLTPSIFDVHSSSECKTKFDNFDDLKTECSSIPLEISAGERRKHKERKEKKREKLRNMTEATVPNSPTTNDTSSEKLSKEERHRLKKSKKSKSMDNSCNTKIYNSSGAHPSTSPSLPATPTSAPSTAQTSKRGEDKMEFIFGIISDEEESQFPEQAETNKDIIPSSVSTTGPIVSAALQTYKQEPSTPNSKNEEAHIQLTVHEPEQQQQLERSRLSGGSSSSSHADRERHRREKREKKRREKSQREQQNQIHQKSSKVETKVDDDNSVDMDEAGRALEAQLMSDFDTKPISEEATPSTAATYRSDMTDVFRFSDNEDNNSVDMTKQGVKSEQQEQHKSKDKKKKKKRSKEEKQEKLLQQQRRESLPNVASTSSAPPTPGKLTVNVQAASKHADLQLDAKHISSPPVCKPSPSLPCLIGDDDDDALHTPKAKPTTPSSRGNDGLTPSREKPRLISPIPKTPTIANSSTLSTQSAETPVSSGTVISSSALATTPTSSTAAGVSAAPGLDNSPTSASAQCKKKESFIPGFDGQLDDRISESAVQSISAEFNSTSLLDNIADEPKIPVASPPRATKPLDKLEESKSRVTISQEETESAVSALLGESFGTSSTTDYSLDGMDEMSSVNELETPTLVIAEPDEEAALAAKAIETAGEPASILEEPEMEPEREAEPDPDPEAEIESEPVVEVLDPEELNKAVQSLKHEDMMDIKADTPQSERDLQIDTDTEENPDEADSSGPSLKIDETVQSSSSPEKSISNNSPTPRETANIDIPNVESQPKLSNESTPQPSVITKLPFLDTPKTVPAGLPPSPVKIEPPTISKLQQPLVQPVQTVLPAPHSTGSGISANSVINLDLSNVISSCSNTSAASATASASASISFGSPTASQNAMPQASTPKQGPITPQQAIRTQSLIMQPPTISIPEQTPHFAVPQMVLSPQSHHPQQPGTYMVGIRAPSPHSPLHSPGRGVAQSRLVGQLSPVGRPMVSQPSPQQQVQQTQQQHALITSPQSSNISPLASPTTRVLSSSNSPTTSKVNSYQPRNQQVPQQPSPKSVAEVQTTPQLMTIPLQKMTPIQVPHHPTIISKVVTVQPQQATQSQVASSPPLGSLPPHKNVHLNAHQNQQQPQVIAKMTAHQHQQHMQQFMHQQMIQRQQHMQQQQLHGQSQQITSAPQHQMHQQHQAQQQQQHHNQQHLNQQLHAQQHPTQKQHQAQQQFNQQIQQHQSQQQHQVQQQNQAQQQHLSQQQHQSQQQLNQQHQAQQQQLQQIQKLQQMHGPQQQQKSPQGVGHLGGSTSIFASQQHNSQLPARGVPQQQHPQQLSHSSPCKPNTLVSVNQGVQPPAILTRVGSHSQPNQQQQLPHQQSSSGHPHQKQLSSPGANLPLQTPLNVIQNTPKIIVQQHIVAQNQVPPPQTQGNAIHYPQNQGKDSTPPGHVEPTPAMSAQKTSESVSVIRTPTPTTGLAVISANTVGSLLTEENLIKISQPKQDELIEQDSKEVDSDYWSAKEVNIDSVIKKLDTPLASKDAKRAVEMQAIAPAPIPNPQPGNQSMAQETALPTTSMSVNNSNDHDTEDETETRQLPPAKPPIPTVGRPPGRGGSAKRGRQPRGAKKVGGFPLNSVTAAPPGVDSLVVQPGDNGVQTRLRKPVTAPVTRGRKGRPPRNLLLQQQQLQQQQLDIQRKGMEMVTSATSSTPLPTPIPTSSVLTAAEKKARNQALTQAQEQNQVASQVGTGQDIYEFHEDGGEEPKPKTISSVAPSAEDQRPRLILTINKTQPSIKNISEMEQTIQQQQQQQSEVISNTDPIGGDNSESCNTRKSRRLQEKEDRSTVDDIIEDVVRNTNTPTGTGPHLPKGAQTPPRRSGRNAQAKKTDAVQIINAVGRPRRSKDRKTIGEQTANLIEEVTASNATVAASHLAPPEGAGVESHVPQLDAKEVEPVSVVTPISTPAPVSVAAPVTVPVPAMVPVKPTMPQHPKKKAIAAAEIESYQAINSSIPSGGLPMHQTAAPATQKITGGVADAVSKALVDPVTGVITAGMPQGKEGNLPAATAAAPANSSNEDGQAAPPPQLQHQQQQQHPQQPPQQQANLQINTTLIPSGLPNPITALGKSVQLETSAAALLNKPVSVLVKGNASQVIQQQQPQIVAPAKQPIILQQNPLPTVLHHAQHTTVRPPQPLKAHVLNREKNIQQQLTPTKQAVAQPPQHAPHSGHMLLTDTAGNQQLVQPQIIARHLQQQQHLQVNVPPPTAHSPHSPRIPSQQQQLGPGASISPQQQQPQTVVIKQAASAAQPQILHVVSSKASVVPQPQQQQLPPTSSTGPHLQLAKPNYSYAPTVLTPTLPAVQQQQQQHLYKQNNQQKGAQIQMPPHGIIMPTHPGMLLQQKLPAHLQPQQHQLNPSPPPGKPNPVLHGLQSGQIMPGSVGSPPPVSAAVLKTAQQQVNSVVPVAGIRTAIPNISPQSQPRVSPLVLPPGISGVPPFDASLHDLGAYVSGRRTQSPPPAHQQASPITPNDSTYRGVTASRDFMLYQHHLMRGGDYDDKMGSSPPLELRRPGSGPPRTIAVPHSLQSPQDRTAADSPQMAQVYVHNTRIPPAHFSEIASRGLYDSGALQLEPPPAHRPTATISVVVPQQMPAVSSGSPFIGRDGSVQPGSHHHPGKAMDMQLDEMDRMSMIAAVVQQQQEHLPPALPAGMELASQQAPPAMAPPPGDSLVTLLQRYPVMWQGLLALKTDQAAVQMHFVHGNPNVARASLPSLVETNTPLLRIAQRMRLEQTQLEGVAKKMQVDKEHCMLLALPCGRDHADVLQHSRNLQTGFITYLQQKMAAGIVNIPIPGSEQAAYVVHIFPSCDFANENLERAAPDLKNRVAELAHLLIVIATV</sequence>
<gene>
    <name type="primary">spen</name>
    <name type="ORF">CG18497</name>
</gene>
<protein>
    <recommendedName>
        <fullName>Protein split ends</fullName>
    </recommendedName>
</protein>